<organism>
    <name type="scientific">Mannheimia succiniciproducens (strain KCTC 0769BP / MBEL55E)</name>
    <dbReference type="NCBI Taxonomy" id="221988"/>
    <lineage>
        <taxon>Bacteria</taxon>
        <taxon>Pseudomonadati</taxon>
        <taxon>Pseudomonadota</taxon>
        <taxon>Gammaproteobacteria</taxon>
        <taxon>Pasteurellales</taxon>
        <taxon>Pasteurellaceae</taxon>
        <taxon>Basfia</taxon>
    </lineage>
</organism>
<evidence type="ECO:0000255" key="1">
    <source>
        <dbReference type="HAMAP-Rule" id="MF_00019"/>
    </source>
</evidence>
<name>PLSX_MANSM</name>
<keyword id="KW-0963">Cytoplasm</keyword>
<keyword id="KW-0444">Lipid biosynthesis</keyword>
<keyword id="KW-0443">Lipid metabolism</keyword>
<keyword id="KW-0594">Phospholipid biosynthesis</keyword>
<keyword id="KW-1208">Phospholipid metabolism</keyword>
<keyword id="KW-0808">Transferase</keyword>
<sequence>MSRLTLALDVMGGDIGPRITIPASIKALEKDPMLSLLLFGDSQQINPLLEQVPSALKERLRVCHCSRVVENNQGLSYALRHSKGTSMRLAIEAVQKGEAQGCVSAGNTAALMGLSKVLLQPLKGIDRPALISLLPTMDGGRTVMLDLGANIDCNANNLYQFALMGAIFAENQLDLVFPRIALLNIGIEEIKGYKSIREAADLLTGNSSLNYIGFIEGNLLLNGKADVIVSDGFVGNIALKTLEGAAKNVISLIKGKSRNHLLKPLFNWLIKLLFKDSYQRLQKINPDQYNGASLIGLTSIVVKSHGAANIEAFNNAIHDAALQARQQIPEKILAGLQK</sequence>
<proteinExistence type="inferred from homology"/>
<reference key="1">
    <citation type="journal article" date="2004" name="Nat. Biotechnol.">
        <title>The genome sequence of the capnophilic rumen bacterium Mannheimia succiniciproducens.</title>
        <authorList>
            <person name="Hong S.H."/>
            <person name="Kim J.S."/>
            <person name="Lee S.Y."/>
            <person name="In Y.H."/>
            <person name="Choi S.S."/>
            <person name="Rih J.-K."/>
            <person name="Kim C.H."/>
            <person name="Jeong H."/>
            <person name="Hur C.G."/>
            <person name="Kim J.J."/>
        </authorList>
    </citation>
    <scope>NUCLEOTIDE SEQUENCE [LARGE SCALE GENOMIC DNA]</scope>
    <source>
        <strain>KCTC 0769BP / MBEL55E</strain>
    </source>
</reference>
<gene>
    <name evidence="1" type="primary">plsX</name>
    <name type="ordered locus">MS1870</name>
</gene>
<protein>
    <recommendedName>
        <fullName evidence="1">Phosphate acyltransferase</fullName>
        <ecNumber evidence="1">2.3.1.274</ecNumber>
    </recommendedName>
    <alternativeName>
        <fullName evidence="1">Acyl-ACP phosphotransacylase</fullName>
    </alternativeName>
    <alternativeName>
        <fullName evidence="1">Acyl-[acyl-carrier-protein]--phosphate acyltransferase</fullName>
    </alternativeName>
    <alternativeName>
        <fullName evidence="1">Phosphate-acyl-ACP acyltransferase</fullName>
    </alternativeName>
</protein>
<feature type="chain" id="PRO_0000189901" description="Phosphate acyltransferase">
    <location>
        <begin position="1"/>
        <end position="338"/>
    </location>
</feature>
<accession>Q65RD3</accession>
<comment type="function">
    <text evidence="1">Catalyzes the reversible formation of acyl-phosphate (acyl-PO(4)) from acyl-[acyl-carrier-protein] (acyl-ACP). This enzyme utilizes acyl-ACP as fatty acyl donor, but not acyl-CoA.</text>
</comment>
<comment type="catalytic activity">
    <reaction evidence="1">
        <text>a fatty acyl-[ACP] + phosphate = an acyl phosphate + holo-[ACP]</text>
        <dbReference type="Rhea" id="RHEA:42292"/>
        <dbReference type="Rhea" id="RHEA-COMP:9685"/>
        <dbReference type="Rhea" id="RHEA-COMP:14125"/>
        <dbReference type="ChEBI" id="CHEBI:43474"/>
        <dbReference type="ChEBI" id="CHEBI:59918"/>
        <dbReference type="ChEBI" id="CHEBI:64479"/>
        <dbReference type="ChEBI" id="CHEBI:138651"/>
        <dbReference type="EC" id="2.3.1.274"/>
    </reaction>
</comment>
<comment type="pathway">
    <text evidence="1">Lipid metabolism; phospholipid metabolism.</text>
</comment>
<comment type="subunit">
    <text evidence="1">Homodimer. Probably interacts with PlsY.</text>
</comment>
<comment type="subcellular location">
    <subcellularLocation>
        <location evidence="1">Cytoplasm</location>
    </subcellularLocation>
    <text evidence="1">Associated with the membrane possibly through PlsY.</text>
</comment>
<comment type="similarity">
    <text evidence="1">Belongs to the PlsX family.</text>
</comment>
<dbReference type="EC" id="2.3.1.274" evidence="1"/>
<dbReference type="EMBL" id="AE016827">
    <property type="protein sequence ID" value="AAU38477.1"/>
    <property type="molecule type" value="Genomic_DNA"/>
</dbReference>
<dbReference type="RefSeq" id="WP_011201031.1">
    <property type="nucleotide sequence ID" value="NC_006300.1"/>
</dbReference>
<dbReference type="SMR" id="Q65RD3"/>
<dbReference type="STRING" id="221988.MS1870"/>
<dbReference type="KEGG" id="msu:MS1870"/>
<dbReference type="eggNOG" id="COG0416">
    <property type="taxonomic scope" value="Bacteria"/>
</dbReference>
<dbReference type="HOGENOM" id="CLU_039379_1_0_6"/>
<dbReference type="OrthoDB" id="9806408at2"/>
<dbReference type="UniPathway" id="UPA00085"/>
<dbReference type="Proteomes" id="UP000000607">
    <property type="component" value="Chromosome"/>
</dbReference>
<dbReference type="GO" id="GO:0005737">
    <property type="term" value="C:cytoplasm"/>
    <property type="evidence" value="ECO:0007669"/>
    <property type="project" value="UniProtKB-SubCell"/>
</dbReference>
<dbReference type="GO" id="GO:0043811">
    <property type="term" value="F:phosphate:acyl-[acyl carrier protein] acyltransferase activity"/>
    <property type="evidence" value="ECO:0007669"/>
    <property type="project" value="UniProtKB-UniRule"/>
</dbReference>
<dbReference type="GO" id="GO:0006633">
    <property type="term" value="P:fatty acid biosynthetic process"/>
    <property type="evidence" value="ECO:0007669"/>
    <property type="project" value="UniProtKB-UniRule"/>
</dbReference>
<dbReference type="GO" id="GO:0008654">
    <property type="term" value="P:phospholipid biosynthetic process"/>
    <property type="evidence" value="ECO:0007669"/>
    <property type="project" value="UniProtKB-KW"/>
</dbReference>
<dbReference type="Gene3D" id="3.40.718.10">
    <property type="entry name" value="Isopropylmalate Dehydrogenase"/>
    <property type="match status" value="1"/>
</dbReference>
<dbReference type="HAMAP" id="MF_00019">
    <property type="entry name" value="PlsX"/>
    <property type="match status" value="1"/>
</dbReference>
<dbReference type="InterPro" id="IPR003664">
    <property type="entry name" value="FA_synthesis"/>
</dbReference>
<dbReference type="InterPro" id="IPR012281">
    <property type="entry name" value="Phospholipid_synth_PlsX-like"/>
</dbReference>
<dbReference type="NCBIfam" id="TIGR00182">
    <property type="entry name" value="plsX"/>
    <property type="match status" value="1"/>
</dbReference>
<dbReference type="PANTHER" id="PTHR30100">
    <property type="entry name" value="FATTY ACID/PHOSPHOLIPID SYNTHESIS PROTEIN PLSX"/>
    <property type="match status" value="1"/>
</dbReference>
<dbReference type="PANTHER" id="PTHR30100:SF1">
    <property type="entry name" value="PHOSPHATE ACYLTRANSFERASE"/>
    <property type="match status" value="1"/>
</dbReference>
<dbReference type="Pfam" id="PF02504">
    <property type="entry name" value="FA_synthesis"/>
    <property type="match status" value="1"/>
</dbReference>
<dbReference type="PIRSF" id="PIRSF002465">
    <property type="entry name" value="Phsphlp_syn_PlsX"/>
    <property type="match status" value="1"/>
</dbReference>
<dbReference type="SUPFAM" id="SSF53659">
    <property type="entry name" value="Isocitrate/Isopropylmalate dehydrogenase-like"/>
    <property type="match status" value="1"/>
</dbReference>